<proteinExistence type="inferred from homology"/>
<keyword id="KW-0067">ATP-binding</keyword>
<keyword id="KW-0963">Cytoplasm</keyword>
<keyword id="KW-0210">Decarboxylase</keyword>
<keyword id="KW-0312">Gluconeogenesis</keyword>
<keyword id="KW-0456">Lyase</keyword>
<keyword id="KW-0464">Manganese</keyword>
<keyword id="KW-0479">Metal-binding</keyword>
<keyword id="KW-0547">Nucleotide-binding</keyword>
<keyword id="KW-1185">Reference proteome</keyword>
<reference key="1">
    <citation type="journal article" date="2004" name="Nature">
        <title>Genome sequence of Silicibacter pomeroyi reveals adaptations to the marine environment.</title>
        <authorList>
            <person name="Moran M.A."/>
            <person name="Buchan A."/>
            <person name="Gonzalez J.M."/>
            <person name="Heidelberg J.F."/>
            <person name="Whitman W.B."/>
            <person name="Kiene R.P."/>
            <person name="Henriksen J.R."/>
            <person name="King G.M."/>
            <person name="Belas R."/>
            <person name="Fuqua C."/>
            <person name="Brinkac L.M."/>
            <person name="Lewis M."/>
            <person name="Johri S."/>
            <person name="Weaver B."/>
            <person name="Pai G."/>
            <person name="Eisen J.A."/>
            <person name="Rahe E."/>
            <person name="Sheldon W.M."/>
            <person name="Ye W."/>
            <person name="Miller T.R."/>
            <person name="Carlton J."/>
            <person name="Rasko D.A."/>
            <person name="Paulsen I.T."/>
            <person name="Ren Q."/>
            <person name="Daugherty S.C."/>
            <person name="DeBoy R.T."/>
            <person name="Dodson R.J."/>
            <person name="Durkin A.S."/>
            <person name="Madupu R."/>
            <person name="Nelson W.C."/>
            <person name="Sullivan S.A."/>
            <person name="Rosovitz M.J."/>
            <person name="Haft D.H."/>
            <person name="Selengut J."/>
            <person name="Ward N."/>
        </authorList>
    </citation>
    <scope>NUCLEOTIDE SEQUENCE [LARGE SCALE GENOMIC DNA]</scope>
    <source>
        <strain>ATCC 700808 / DSM 15171 / DSS-3</strain>
    </source>
</reference>
<reference key="2">
    <citation type="journal article" date="2014" name="Stand. Genomic Sci.">
        <title>An updated genome annotation for the model marine bacterium Ruegeria pomeroyi DSS-3.</title>
        <authorList>
            <person name="Rivers A.R."/>
            <person name="Smith C.B."/>
            <person name="Moran M.A."/>
        </authorList>
    </citation>
    <scope>GENOME REANNOTATION</scope>
    <source>
        <strain>ATCC 700808 / DSM 15171 / DSS-3</strain>
    </source>
</reference>
<comment type="function">
    <text evidence="1">Involved in the gluconeogenesis. Catalyzes the conversion of oxaloacetate (OAA) to phosphoenolpyruvate (PEP) through direct phosphoryl transfer between the nucleoside triphosphate and OAA.</text>
</comment>
<comment type="catalytic activity">
    <reaction evidence="1">
        <text>oxaloacetate + ATP = phosphoenolpyruvate + ADP + CO2</text>
        <dbReference type="Rhea" id="RHEA:18617"/>
        <dbReference type="ChEBI" id="CHEBI:16452"/>
        <dbReference type="ChEBI" id="CHEBI:16526"/>
        <dbReference type="ChEBI" id="CHEBI:30616"/>
        <dbReference type="ChEBI" id="CHEBI:58702"/>
        <dbReference type="ChEBI" id="CHEBI:456216"/>
        <dbReference type="EC" id="4.1.1.49"/>
    </reaction>
</comment>
<comment type="cofactor">
    <cofactor evidence="1">
        <name>Mn(2+)</name>
        <dbReference type="ChEBI" id="CHEBI:29035"/>
    </cofactor>
    <text evidence="1">Binds 1 Mn(2+) ion per subunit.</text>
</comment>
<comment type="pathway">
    <text evidence="1">Carbohydrate biosynthesis; gluconeogenesis.</text>
</comment>
<comment type="subcellular location">
    <subcellularLocation>
        <location evidence="1">Cytoplasm</location>
    </subcellularLocation>
</comment>
<comment type="similarity">
    <text evidence="1">Belongs to the phosphoenolpyruvate carboxykinase (ATP) family.</text>
</comment>
<gene>
    <name evidence="1" type="primary">pckA</name>
    <name type="ordered locus">SPO0709</name>
</gene>
<organism>
    <name type="scientific">Ruegeria pomeroyi (strain ATCC 700808 / DSM 15171 / DSS-3)</name>
    <name type="common">Silicibacter pomeroyi</name>
    <dbReference type="NCBI Taxonomy" id="246200"/>
    <lineage>
        <taxon>Bacteria</taxon>
        <taxon>Pseudomonadati</taxon>
        <taxon>Pseudomonadota</taxon>
        <taxon>Alphaproteobacteria</taxon>
        <taxon>Rhodobacterales</taxon>
        <taxon>Roseobacteraceae</taxon>
        <taxon>Ruegeria</taxon>
    </lineage>
</organism>
<name>PCKA_RUEPO</name>
<accession>Q5LVJ2</accession>
<sequence>MTSGRVNPQFRLEDQGIEGLGNVYYNFMEPALIEAALKRGEGTLGNGGAFLVTTGKFTGRSPKDKHVVKTASVADSIWWDNNAAMTPEGFDALYDDMLAHMKGKDYFVQDLVGGADPAYSINVRMVTELAWHNLFIRHLLRRPAREDLNEFVADFTVINCPSFQADPAKHGCRSETVIAMNFDRKLILIGGTEYAGENKKSVFTLLNYMLPEKGVMPMHCSANHAVGNPVDTAVFFGLSGTGKTTLSADPARVLIGDDEHGWSDRGTFNFEGGCYAKTINLNPEAEPEIYATTTKFATVIENMVFDEETKELDFDDDSLTANMRCAYPLEYISNASVSALGGHPKNIIMLTCDAFGVLPPIARLTPAQAMYHFLSGFTSKVAGTERGVTEPQPTFSTCFGAPFMPRRPEVYGNLLRDKIARHGATCWLVNTGWTGGAYGVGSRMPIKATRALLTAALNGSLNNAEFRKDGNFGFDVPVSVPGVAEVLLDPRRTWDDQGAFDKQAAKLVQMFADNFEQYVPYIDEDVKAVAIG</sequence>
<feature type="chain" id="PRO_0000236946" description="Phosphoenolpyruvate carboxykinase (ATP)">
    <location>
        <begin position="1"/>
        <end position="532"/>
    </location>
</feature>
<feature type="binding site" evidence="1">
    <location>
        <position position="60"/>
    </location>
    <ligand>
        <name>substrate</name>
    </ligand>
</feature>
<feature type="binding site" evidence="1">
    <location>
        <position position="194"/>
    </location>
    <ligand>
        <name>substrate</name>
    </ligand>
</feature>
<feature type="binding site" evidence="1">
    <location>
        <position position="200"/>
    </location>
    <ligand>
        <name>ATP</name>
        <dbReference type="ChEBI" id="CHEBI:30616"/>
    </ligand>
</feature>
<feature type="binding site" evidence="1">
    <location>
        <position position="200"/>
    </location>
    <ligand>
        <name>Mn(2+)</name>
        <dbReference type="ChEBI" id="CHEBI:29035"/>
    </ligand>
</feature>
<feature type="binding site" evidence="1">
    <location>
        <position position="200"/>
    </location>
    <ligand>
        <name>substrate</name>
    </ligand>
</feature>
<feature type="binding site" evidence="1">
    <location>
        <position position="219"/>
    </location>
    <ligand>
        <name>ATP</name>
        <dbReference type="ChEBI" id="CHEBI:30616"/>
    </ligand>
</feature>
<feature type="binding site" evidence="1">
    <location>
        <position position="219"/>
    </location>
    <ligand>
        <name>Mn(2+)</name>
        <dbReference type="ChEBI" id="CHEBI:29035"/>
    </ligand>
</feature>
<feature type="binding site" evidence="1">
    <location>
        <begin position="237"/>
        <end position="245"/>
    </location>
    <ligand>
        <name>ATP</name>
        <dbReference type="ChEBI" id="CHEBI:30616"/>
    </ligand>
</feature>
<feature type="binding site" evidence="1">
    <location>
        <position position="258"/>
    </location>
    <ligand>
        <name>Mn(2+)</name>
        <dbReference type="ChEBI" id="CHEBI:29035"/>
    </ligand>
</feature>
<feature type="binding site" evidence="1">
    <location>
        <position position="286"/>
    </location>
    <ligand>
        <name>ATP</name>
        <dbReference type="ChEBI" id="CHEBI:30616"/>
    </ligand>
</feature>
<feature type="binding site" evidence="1">
    <location>
        <position position="324"/>
    </location>
    <ligand>
        <name>ATP</name>
        <dbReference type="ChEBI" id="CHEBI:30616"/>
    </ligand>
</feature>
<feature type="binding site" evidence="1">
    <location>
        <position position="324"/>
    </location>
    <ligand>
        <name>substrate</name>
    </ligand>
</feature>
<feature type="binding site" evidence="1">
    <location>
        <position position="449"/>
    </location>
    <ligand>
        <name>ATP</name>
        <dbReference type="ChEBI" id="CHEBI:30616"/>
    </ligand>
</feature>
<protein>
    <recommendedName>
        <fullName evidence="1">Phosphoenolpyruvate carboxykinase (ATP)</fullName>
        <shortName evidence="1">PCK</shortName>
        <shortName evidence="1">PEP carboxykinase</shortName>
        <shortName evidence="1">PEPCK</shortName>
        <ecNumber evidence="1">4.1.1.49</ecNumber>
    </recommendedName>
</protein>
<evidence type="ECO:0000255" key="1">
    <source>
        <dbReference type="HAMAP-Rule" id="MF_00453"/>
    </source>
</evidence>
<dbReference type="EC" id="4.1.1.49" evidence="1"/>
<dbReference type="EMBL" id="CP000031">
    <property type="protein sequence ID" value="AAV94015.1"/>
    <property type="molecule type" value="Genomic_DNA"/>
</dbReference>
<dbReference type="RefSeq" id="WP_011046459.1">
    <property type="nucleotide sequence ID" value="NC_003911.12"/>
</dbReference>
<dbReference type="SMR" id="Q5LVJ2"/>
<dbReference type="STRING" id="246200.SPO0709"/>
<dbReference type="PaxDb" id="246200-SPO0709"/>
<dbReference type="KEGG" id="sil:SPO0709"/>
<dbReference type="eggNOG" id="COG1866">
    <property type="taxonomic scope" value="Bacteria"/>
</dbReference>
<dbReference type="HOGENOM" id="CLU_018247_0_1_5"/>
<dbReference type="OrthoDB" id="9806325at2"/>
<dbReference type="UniPathway" id="UPA00138"/>
<dbReference type="Proteomes" id="UP000001023">
    <property type="component" value="Chromosome"/>
</dbReference>
<dbReference type="GO" id="GO:0005829">
    <property type="term" value="C:cytosol"/>
    <property type="evidence" value="ECO:0007669"/>
    <property type="project" value="TreeGrafter"/>
</dbReference>
<dbReference type="GO" id="GO:0005524">
    <property type="term" value="F:ATP binding"/>
    <property type="evidence" value="ECO:0007669"/>
    <property type="project" value="UniProtKB-UniRule"/>
</dbReference>
<dbReference type="GO" id="GO:0046872">
    <property type="term" value="F:metal ion binding"/>
    <property type="evidence" value="ECO:0007669"/>
    <property type="project" value="UniProtKB-KW"/>
</dbReference>
<dbReference type="GO" id="GO:0004612">
    <property type="term" value="F:phosphoenolpyruvate carboxykinase (ATP) activity"/>
    <property type="evidence" value="ECO:0007669"/>
    <property type="project" value="UniProtKB-UniRule"/>
</dbReference>
<dbReference type="GO" id="GO:0006094">
    <property type="term" value="P:gluconeogenesis"/>
    <property type="evidence" value="ECO:0007669"/>
    <property type="project" value="UniProtKB-UniRule"/>
</dbReference>
<dbReference type="CDD" id="cd00484">
    <property type="entry name" value="PEPCK_ATP"/>
    <property type="match status" value="1"/>
</dbReference>
<dbReference type="Gene3D" id="3.90.228.20">
    <property type="match status" value="1"/>
</dbReference>
<dbReference type="Gene3D" id="3.40.449.10">
    <property type="entry name" value="Phosphoenolpyruvate Carboxykinase, domain 1"/>
    <property type="match status" value="1"/>
</dbReference>
<dbReference type="Gene3D" id="2.170.8.10">
    <property type="entry name" value="Phosphoenolpyruvate Carboxykinase, domain 2"/>
    <property type="match status" value="1"/>
</dbReference>
<dbReference type="HAMAP" id="MF_00453">
    <property type="entry name" value="PEPCK_ATP"/>
    <property type="match status" value="1"/>
</dbReference>
<dbReference type="InterPro" id="IPR001272">
    <property type="entry name" value="PEP_carboxykinase_ATP"/>
</dbReference>
<dbReference type="InterPro" id="IPR013035">
    <property type="entry name" value="PEP_carboxykinase_C"/>
</dbReference>
<dbReference type="InterPro" id="IPR008210">
    <property type="entry name" value="PEP_carboxykinase_N"/>
</dbReference>
<dbReference type="NCBIfam" id="TIGR00224">
    <property type="entry name" value="pckA"/>
    <property type="match status" value="1"/>
</dbReference>
<dbReference type="NCBIfam" id="NF006820">
    <property type="entry name" value="PRK09344.1-2"/>
    <property type="match status" value="1"/>
</dbReference>
<dbReference type="NCBIfam" id="NF006821">
    <property type="entry name" value="PRK09344.1-3"/>
    <property type="match status" value="1"/>
</dbReference>
<dbReference type="NCBIfam" id="NF006822">
    <property type="entry name" value="PRK09344.1-4"/>
    <property type="match status" value="1"/>
</dbReference>
<dbReference type="PANTHER" id="PTHR30031:SF0">
    <property type="entry name" value="PHOSPHOENOLPYRUVATE CARBOXYKINASE (ATP)"/>
    <property type="match status" value="1"/>
</dbReference>
<dbReference type="PANTHER" id="PTHR30031">
    <property type="entry name" value="PHOSPHOENOLPYRUVATE CARBOXYKINASE ATP"/>
    <property type="match status" value="1"/>
</dbReference>
<dbReference type="Pfam" id="PF01293">
    <property type="entry name" value="PEPCK_ATP"/>
    <property type="match status" value="1"/>
</dbReference>
<dbReference type="PIRSF" id="PIRSF006294">
    <property type="entry name" value="PEP_crbxkin"/>
    <property type="match status" value="1"/>
</dbReference>
<dbReference type="SUPFAM" id="SSF68923">
    <property type="entry name" value="PEP carboxykinase N-terminal domain"/>
    <property type="match status" value="1"/>
</dbReference>
<dbReference type="SUPFAM" id="SSF53795">
    <property type="entry name" value="PEP carboxykinase-like"/>
    <property type="match status" value="1"/>
</dbReference>